<sequence length="660" mass="71952">MYASSARDGIPGKWCNARRKQLPLLISKDFPAELYHSLPCKSLENGHIKKVKGVKATLAEAPATPTEKSNSEVPQKKLKVLVAGGGIGGLVFALAGKKRGFDVLVFERDISAIRGEGQYRGPIQIQSNALAALEAIDMDVAEEIMNAGCITGQRINGLVDGISGNWYCKFDTFTPAVERGLPVTRVISRMTLQQILARLQGEDVIMNESHVVNFADDGETVTVNPELCQQYTGDLLVGADGIRSKVRTNLFGPSELTYSGYTCYTGIADFVPADIDTAGYRVFLGHKQYFVSSDVGGGKMQWYAFHNEPAGGVDAPNGKKERLLKIFGGWCDNVIDLSVATDEDAILRRDIYDRPPTFSWGKGRVTLLGDSVHAMQPNLGQGGCMAIEDSYQLALELEKAWSRSAESGSPMDVISSLRSYESARKLRVGVIHGLARMAAIMASAYKAYLGVGLGPLSFITKFRIPHPGRVGGRFFIDLGMPLMLSWVLGGNGEKLEGRIQHCRLSEKANDQLRNWFEDDDALERATDAEWLLLPAGNSNAALETLVLSRDENMPCTIGSVSHANIPGKSVVIPLSQVSDMHARISYNGGAFLGTAFRSDHGTWFIDNEGRRYRVSPNFPMRFHSSDVIVFGSDKAAFRIKAMKFAPKTAAKEDRQAVGAA</sequence>
<keyword id="KW-0937">Abscisic acid biosynthesis</keyword>
<keyword id="KW-0150">Chloroplast</keyword>
<keyword id="KW-0274">FAD</keyword>
<keyword id="KW-0285">Flavoprotein</keyword>
<keyword id="KW-0472">Membrane</keyword>
<keyword id="KW-0560">Oxidoreductase</keyword>
<keyword id="KW-0934">Plastid</keyword>
<keyword id="KW-0793">Thylakoid</keyword>
<keyword id="KW-0809">Transit peptide</keyword>
<comment type="function">
    <text evidence="3">Converts zeaxanthin into antheraxanthin and subsequently violaxanthin. Also acts on beta-cryptoxanthin. Involved in the epoxidation of zeaxanthin.</text>
</comment>
<comment type="catalytic activity">
    <reaction evidence="3">
        <text>all-trans-zeaxanthin + 4 reduced [2Fe-2S]-[ferredoxin] + 2 O2 + 4 H(+) = all-trans-violaxanthin + 4 oxidized [2Fe-2S]-[ferredoxin] + 2 H2O</text>
        <dbReference type="Rhea" id="RHEA:32443"/>
        <dbReference type="Rhea" id="RHEA-COMP:10000"/>
        <dbReference type="Rhea" id="RHEA-COMP:10001"/>
        <dbReference type="ChEBI" id="CHEBI:15377"/>
        <dbReference type="ChEBI" id="CHEBI:15378"/>
        <dbReference type="ChEBI" id="CHEBI:15379"/>
        <dbReference type="ChEBI" id="CHEBI:27547"/>
        <dbReference type="ChEBI" id="CHEBI:33737"/>
        <dbReference type="ChEBI" id="CHEBI:33738"/>
        <dbReference type="ChEBI" id="CHEBI:35288"/>
        <dbReference type="EC" id="1.14.15.21"/>
    </reaction>
    <physiologicalReaction direction="left-to-right" evidence="3">
        <dbReference type="Rhea" id="RHEA:32444"/>
    </physiologicalReaction>
</comment>
<comment type="catalytic activity">
    <reaction evidence="3">
        <text>all-trans-zeaxanthin + 2 reduced [2Fe-2S]-[ferredoxin] + O2 + 2 H(+) = all-trans-antheraxanthin + 2 oxidized [2Fe-2S]-[ferredoxin] + H2O</text>
        <dbReference type="Rhea" id="RHEA:24084"/>
        <dbReference type="Rhea" id="RHEA-COMP:10000"/>
        <dbReference type="Rhea" id="RHEA-COMP:10001"/>
        <dbReference type="ChEBI" id="CHEBI:15377"/>
        <dbReference type="ChEBI" id="CHEBI:15378"/>
        <dbReference type="ChEBI" id="CHEBI:15379"/>
        <dbReference type="ChEBI" id="CHEBI:27547"/>
        <dbReference type="ChEBI" id="CHEBI:27867"/>
        <dbReference type="ChEBI" id="CHEBI:33737"/>
        <dbReference type="ChEBI" id="CHEBI:33738"/>
    </reaction>
    <physiologicalReaction direction="left-to-right" evidence="3">
        <dbReference type="Rhea" id="RHEA:24085"/>
    </physiologicalReaction>
</comment>
<comment type="catalytic activity">
    <reaction evidence="3">
        <text>all-trans-antheraxanthin + 2 reduced [2Fe-2S]-[ferredoxin] + O2 + 2 H(+) = all-trans-violaxanthin + 2 oxidized [2Fe-2S]-[ferredoxin] + H2O</text>
        <dbReference type="Rhea" id="RHEA:14937"/>
        <dbReference type="Rhea" id="RHEA-COMP:10000"/>
        <dbReference type="Rhea" id="RHEA-COMP:10001"/>
        <dbReference type="ChEBI" id="CHEBI:15377"/>
        <dbReference type="ChEBI" id="CHEBI:15378"/>
        <dbReference type="ChEBI" id="CHEBI:15379"/>
        <dbReference type="ChEBI" id="CHEBI:27867"/>
        <dbReference type="ChEBI" id="CHEBI:33737"/>
        <dbReference type="ChEBI" id="CHEBI:33738"/>
        <dbReference type="ChEBI" id="CHEBI:35288"/>
    </reaction>
    <physiologicalReaction direction="left-to-right" evidence="3">
        <dbReference type="Rhea" id="RHEA:14938"/>
    </physiologicalReaction>
</comment>
<comment type="catalytic activity">
    <reaction evidence="3">
        <text>beta-cryptoxanthin + 2 reduced [2Fe-2S]-[ferredoxin] + O2 + 2 H(+) = (5R,6S)-5,6-epoxi-beta-cryptoxanthin + 2 oxidized [2Fe-2S]-[ferredoxin] + H2O</text>
        <dbReference type="Rhea" id="RHEA:49316"/>
        <dbReference type="Rhea" id="RHEA-COMP:10000"/>
        <dbReference type="Rhea" id="RHEA-COMP:10001"/>
        <dbReference type="ChEBI" id="CHEBI:10362"/>
        <dbReference type="ChEBI" id="CHEBI:15377"/>
        <dbReference type="ChEBI" id="CHEBI:15378"/>
        <dbReference type="ChEBI" id="CHEBI:15379"/>
        <dbReference type="ChEBI" id="CHEBI:33737"/>
        <dbReference type="ChEBI" id="CHEBI:33738"/>
        <dbReference type="ChEBI" id="CHEBI:91143"/>
    </reaction>
    <physiologicalReaction direction="left-to-right" evidence="3">
        <dbReference type="Rhea" id="RHEA:49317"/>
    </physiologicalReaction>
</comment>
<comment type="cofactor">
    <cofactor evidence="3">
        <name>FAD</name>
        <dbReference type="ChEBI" id="CHEBI:57692"/>
    </cofactor>
</comment>
<comment type="pathway">
    <text evidence="5">Plant hormone biosynthesis; abscisate biosynthesis.</text>
</comment>
<comment type="subcellular location">
    <subcellularLocation>
        <location>Plastid</location>
        <location>Chloroplast membrane</location>
        <topology>Peripheral membrane protein</topology>
    </subcellularLocation>
    <subcellularLocation>
        <location>Plastid</location>
        <location>Chloroplast thylakoid membrane</location>
        <topology>Peripheral membrane protein</topology>
    </subcellularLocation>
</comment>
<comment type="induction">
    <text evidence="3">Up-regulated by oxidative stress and when chloroplasts undergo differentiation into chromoplasts.</text>
</comment>
<organism>
    <name type="scientific">Capsicum annuum</name>
    <name type="common">Capsicum pepper</name>
    <dbReference type="NCBI Taxonomy" id="4072"/>
    <lineage>
        <taxon>Eukaryota</taxon>
        <taxon>Viridiplantae</taxon>
        <taxon>Streptophyta</taxon>
        <taxon>Embryophyta</taxon>
        <taxon>Tracheophyta</taxon>
        <taxon>Spermatophyta</taxon>
        <taxon>Magnoliopsida</taxon>
        <taxon>eudicotyledons</taxon>
        <taxon>Gunneridae</taxon>
        <taxon>Pentapetalae</taxon>
        <taxon>asterids</taxon>
        <taxon>lamiids</taxon>
        <taxon>Solanales</taxon>
        <taxon>Solanaceae</taxon>
        <taxon>Solanoideae</taxon>
        <taxon>Capsiceae</taxon>
        <taxon>Capsicum</taxon>
    </lineage>
</organism>
<accession>Q96375</accession>
<reference key="1">
    <citation type="journal article" date="1996" name="J. Biol. Chem.">
        <title>Xanthophyll biosynthesis. Cloning, expression, functional reconstitution, and regulation of beta-cyclohexenyl carotenoid epoxidase from pepper (Capsicum annuum).</title>
        <authorList>
            <person name="Bouvier F."/>
            <person name="D'Harlingue A."/>
            <person name="Hugueney P."/>
            <person name="Marin E."/>
            <person name="Marion-Poll A."/>
            <person name="Camara B."/>
        </authorList>
    </citation>
    <scope>NUCLEOTIDE SEQUENCE [MRNA]</scope>
    <scope>FUNCTION</scope>
    <scope>CATALYTIC ACTIVITY</scope>
    <scope>COFACTOR</scope>
    <scope>INDUCTION</scope>
    <source>
        <strain>cv. Yolo Wonder</strain>
    </source>
</reference>
<proteinExistence type="evidence at protein level"/>
<feature type="transit peptide" description="Chloroplast" evidence="1">
    <location>
        <begin position="1"/>
        <end position="49"/>
    </location>
</feature>
<feature type="chain" id="PRO_0000020609" description="Zeaxanthin epoxidase, chloroplastic">
    <location>
        <begin position="50"/>
        <end position="660"/>
    </location>
</feature>
<feature type="domain" description="FHA" evidence="2">
    <location>
        <begin position="545"/>
        <end position="609"/>
    </location>
</feature>
<feature type="binding site" evidence="1">
    <location>
        <begin position="79"/>
        <end position="107"/>
    </location>
    <ligand>
        <name>FAD</name>
        <dbReference type="ChEBI" id="CHEBI:57692"/>
    </ligand>
</feature>
<feature type="binding site" evidence="1">
    <location>
        <begin position="357"/>
        <end position="370"/>
    </location>
    <ligand>
        <name>FAD</name>
        <dbReference type="ChEBI" id="CHEBI:57692"/>
    </ligand>
</feature>
<name>ABA2_CAPAN</name>
<protein>
    <recommendedName>
        <fullName evidence="4">Zeaxanthin epoxidase, chloroplastic</fullName>
        <ecNumber evidence="3">1.14.15.21</ecNumber>
    </recommendedName>
    <alternativeName>
        <fullName evidence="4">Beta-cyclohexenyl epoxidase</fullName>
    </alternativeName>
    <alternativeName>
        <fullName evidence="4">Xanthophyll epoxidase</fullName>
    </alternativeName>
</protein>
<dbReference type="EC" id="1.14.15.21" evidence="3"/>
<dbReference type="EMBL" id="X91491">
    <property type="protein sequence ID" value="CAA62795.1"/>
    <property type="molecule type" value="mRNA"/>
</dbReference>
<dbReference type="PIR" id="T09537">
    <property type="entry name" value="T09537"/>
</dbReference>
<dbReference type="SMR" id="Q96375"/>
<dbReference type="SwissLipids" id="SLP:000001507"/>
<dbReference type="BioCyc" id="MetaCyc:MONOMER-2601"/>
<dbReference type="UniPathway" id="UPA00090"/>
<dbReference type="GO" id="GO:0031969">
    <property type="term" value="C:chloroplast membrane"/>
    <property type="evidence" value="ECO:0007669"/>
    <property type="project" value="UniProtKB-SubCell"/>
</dbReference>
<dbReference type="GO" id="GO:0009535">
    <property type="term" value="C:chloroplast thylakoid membrane"/>
    <property type="evidence" value="ECO:0007669"/>
    <property type="project" value="UniProtKB-SubCell"/>
</dbReference>
<dbReference type="GO" id="GO:0071949">
    <property type="term" value="F:FAD binding"/>
    <property type="evidence" value="ECO:0007669"/>
    <property type="project" value="InterPro"/>
</dbReference>
<dbReference type="GO" id="GO:0052662">
    <property type="term" value="F:zeaxanthin epoxidase activity"/>
    <property type="evidence" value="ECO:0007669"/>
    <property type="project" value="UniProtKB-EC"/>
</dbReference>
<dbReference type="GO" id="GO:0009688">
    <property type="term" value="P:abscisic acid biosynthetic process"/>
    <property type="evidence" value="ECO:0007669"/>
    <property type="project" value="UniProtKB-UniPathway"/>
</dbReference>
<dbReference type="CDD" id="cd22702">
    <property type="entry name" value="FHA_ZEP-like"/>
    <property type="match status" value="1"/>
</dbReference>
<dbReference type="Gene3D" id="2.60.200.20">
    <property type="match status" value="1"/>
</dbReference>
<dbReference type="Gene3D" id="3.50.50.60">
    <property type="entry name" value="FAD/NAD(P)-binding domain"/>
    <property type="match status" value="1"/>
</dbReference>
<dbReference type="InterPro" id="IPR002938">
    <property type="entry name" value="FAD-bd"/>
</dbReference>
<dbReference type="InterPro" id="IPR036188">
    <property type="entry name" value="FAD/NAD-bd_sf"/>
</dbReference>
<dbReference type="InterPro" id="IPR000253">
    <property type="entry name" value="FHA_dom"/>
</dbReference>
<dbReference type="InterPro" id="IPR008984">
    <property type="entry name" value="SMAD_FHA_dom_sf"/>
</dbReference>
<dbReference type="InterPro" id="IPR017079">
    <property type="entry name" value="Zeaxanthin_epoxidase"/>
</dbReference>
<dbReference type="PANTHER" id="PTHR46496">
    <property type="match status" value="1"/>
</dbReference>
<dbReference type="PANTHER" id="PTHR46496:SF1">
    <property type="entry name" value="ZEAXANTHIN EPOXIDASE, CHLOROPLASTIC"/>
    <property type="match status" value="1"/>
</dbReference>
<dbReference type="Pfam" id="PF01494">
    <property type="entry name" value="FAD_binding_3"/>
    <property type="match status" value="1"/>
</dbReference>
<dbReference type="Pfam" id="PF00498">
    <property type="entry name" value="FHA"/>
    <property type="match status" value="1"/>
</dbReference>
<dbReference type="PIRSF" id="PIRSF036989">
    <property type="entry name" value="Zeaxanthin_epoxidase"/>
    <property type="match status" value="1"/>
</dbReference>
<dbReference type="PRINTS" id="PR00420">
    <property type="entry name" value="RNGMNOXGNASE"/>
</dbReference>
<dbReference type="SUPFAM" id="SSF51905">
    <property type="entry name" value="FAD/NAD(P)-binding domain"/>
    <property type="match status" value="1"/>
</dbReference>
<dbReference type="SUPFAM" id="SSF49879">
    <property type="entry name" value="SMAD/FHA domain"/>
    <property type="match status" value="1"/>
</dbReference>
<evidence type="ECO:0000255" key="1"/>
<evidence type="ECO:0000255" key="2">
    <source>
        <dbReference type="PROSITE-ProRule" id="PRU00086"/>
    </source>
</evidence>
<evidence type="ECO:0000269" key="3">
    <source>
    </source>
</evidence>
<evidence type="ECO:0000303" key="4">
    <source>
    </source>
</evidence>
<evidence type="ECO:0000305" key="5"/>